<comment type="catalytic activity">
    <reaction>
        <text>shikimate + ATP = 3-phosphoshikimate + ADP + H(+)</text>
        <dbReference type="Rhea" id="RHEA:13121"/>
        <dbReference type="ChEBI" id="CHEBI:15378"/>
        <dbReference type="ChEBI" id="CHEBI:30616"/>
        <dbReference type="ChEBI" id="CHEBI:36208"/>
        <dbReference type="ChEBI" id="CHEBI:145989"/>
        <dbReference type="ChEBI" id="CHEBI:456216"/>
        <dbReference type="EC" id="2.7.1.71"/>
    </reaction>
</comment>
<comment type="pathway">
    <text>Metabolic intermediate biosynthesis; chorismate biosynthesis; chorismate from D-erythrose 4-phosphate and phosphoenolpyruvate: step 5/7.</text>
</comment>
<comment type="subcellular location">
    <subcellularLocation>
        <location evidence="1">Cytoplasm</location>
    </subcellularLocation>
</comment>
<comment type="similarity">
    <text evidence="3">Belongs to the GHMP kinase family. Archaeal shikimate kinase subfamily.</text>
</comment>
<comment type="sequence caution" evidence="3">
    <conflict type="erroneous initiation">
        <sequence resource="EMBL-CDS" id="AAM04794"/>
    </conflict>
</comment>
<keyword id="KW-0028">Amino-acid biosynthesis</keyword>
<keyword id="KW-0057">Aromatic amino acid biosynthesis</keyword>
<keyword id="KW-0067">ATP-binding</keyword>
<keyword id="KW-0963">Cytoplasm</keyword>
<keyword id="KW-0418">Kinase</keyword>
<keyword id="KW-0547">Nucleotide-binding</keyword>
<keyword id="KW-1185">Reference proteome</keyword>
<keyword id="KW-0808">Transferase</keyword>
<organism>
    <name type="scientific">Methanosarcina acetivorans (strain ATCC 35395 / DSM 2834 / JCM 12185 / C2A)</name>
    <dbReference type="NCBI Taxonomy" id="188937"/>
    <lineage>
        <taxon>Archaea</taxon>
        <taxon>Methanobacteriati</taxon>
        <taxon>Methanobacteriota</taxon>
        <taxon>Stenosarchaea group</taxon>
        <taxon>Methanomicrobia</taxon>
        <taxon>Methanosarcinales</taxon>
        <taxon>Methanosarcinaceae</taxon>
        <taxon>Methanosarcina</taxon>
    </lineage>
</organism>
<dbReference type="EC" id="2.7.1.71"/>
<dbReference type="EMBL" id="AE010299">
    <property type="protein sequence ID" value="AAM04794.1"/>
    <property type="status" value="ALT_INIT"/>
    <property type="molecule type" value="Genomic_DNA"/>
</dbReference>
<dbReference type="RefSeq" id="WP_011021396.1">
    <property type="nucleotide sequence ID" value="NC_003552.1"/>
</dbReference>
<dbReference type="SMR" id="Q8TR06"/>
<dbReference type="FunCoup" id="Q8TR06">
    <property type="interactions" value="81"/>
</dbReference>
<dbReference type="STRING" id="188937.MA_1378"/>
<dbReference type="EnsemblBacteria" id="AAM04794">
    <property type="protein sequence ID" value="AAM04794"/>
    <property type="gene ID" value="MA_1378"/>
</dbReference>
<dbReference type="GeneID" id="1473266"/>
<dbReference type="KEGG" id="mac:MA_1378"/>
<dbReference type="HOGENOM" id="CLU_073768_0_0_2"/>
<dbReference type="InParanoid" id="Q8TR06"/>
<dbReference type="OrthoDB" id="9602at2157"/>
<dbReference type="PhylomeDB" id="Q8TR06"/>
<dbReference type="UniPathway" id="UPA00053">
    <property type="reaction ID" value="UER00088"/>
</dbReference>
<dbReference type="Proteomes" id="UP000002487">
    <property type="component" value="Chromosome"/>
</dbReference>
<dbReference type="GO" id="GO:0005737">
    <property type="term" value="C:cytoplasm"/>
    <property type="evidence" value="ECO:0007669"/>
    <property type="project" value="UniProtKB-SubCell"/>
</dbReference>
<dbReference type="GO" id="GO:0005524">
    <property type="term" value="F:ATP binding"/>
    <property type="evidence" value="ECO:0007669"/>
    <property type="project" value="UniProtKB-UniRule"/>
</dbReference>
<dbReference type="GO" id="GO:0004765">
    <property type="term" value="F:shikimate kinase activity"/>
    <property type="evidence" value="ECO:0007669"/>
    <property type="project" value="UniProtKB-UniRule"/>
</dbReference>
<dbReference type="GO" id="GO:0008652">
    <property type="term" value="P:amino acid biosynthetic process"/>
    <property type="evidence" value="ECO:0007669"/>
    <property type="project" value="UniProtKB-KW"/>
</dbReference>
<dbReference type="GO" id="GO:0009073">
    <property type="term" value="P:aromatic amino acid family biosynthetic process"/>
    <property type="evidence" value="ECO:0007669"/>
    <property type="project" value="UniProtKB-KW"/>
</dbReference>
<dbReference type="GO" id="GO:0009423">
    <property type="term" value="P:chorismate biosynthetic process"/>
    <property type="evidence" value="ECO:0007669"/>
    <property type="project" value="UniProtKB-UniRule"/>
</dbReference>
<dbReference type="Gene3D" id="3.30.230.10">
    <property type="match status" value="1"/>
</dbReference>
<dbReference type="HAMAP" id="MF_00370">
    <property type="entry name" value="Shik_kinase_arch"/>
    <property type="match status" value="1"/>
</dbReference>
<dbReference type="InterPro" id="IPR013750">
    <property type="entry name" value="GHMP_kinase_C_dom"/>
</dbReference>
<dbReference type="InterPro" id="IPR036554">
    <property type="entry name" value="GHMP_kinase_C_sf"/>
</dbReference>
<dbReference type="InterPro" id="IPR006204">
    <property type="entry name" value="GHMP_kinase_N_dom"/>
</dbReference>
<dbReference type="InterPro" id="IPR020568">
    <property type="entry name" value="Ribosomal_Su5_D2-typ_SF"/>
</dbReference>
<dbReference type="InterPro" id="IPR014721">
    <property type="entry name" value="Ribsml_uS5_D2-typ_fold_subgr"/>
</dbReference>
<dbReference type="InterPro" id="IPR010189">
    <property type="entry name" value="SK_arc"/>
</dbReference>
<dbReference type="NCBIfam" id="TIGR01920">
    <property type="entry name" value="Shik_kin_archae"/>
    <property type="match status" value="1"/>
</dbReference>
<dbReference type="PANTHER" id="PTHR20861">
    <property type="entry name" value="HOMOSERINE/4-DIPHOSPHOCYTIDYL-2-C-METHYL-D-ERYTHRITOL KINASE"/>
    <property type="match status" value="1"/>
</dbReference>
<dbReference type="PANTHER" id="PTHR20861:SF3">
    <property type="entry name" value="SHIKIMATE KINASE"/>
    <property type="match status" value="1"/>
</dbReference>
<dbReference type="Pfam" id="PF08544">
    <property type="entry name" value="GHMP_kinases_C"/>
    <property type="match status" value="1"/>
</dbReference>
<dbReference type="Pfam" id="PF00288">
    <property type="entry name" value="GHMP_kinases_N"/>
    <property type="match status" value="1"/>
</dbReference>
<dbReference type="PIRSF" id="PIRSF005758">
    <property type="entry name" value="Shikimt_kin_arch"/>
    <property type="match status" value="1"/>
</dbReference>
<dbReference type="SUPFAM" id="SSF55060">
    <property type="entry name" value="GHMP Kinase, C-terminal domain"/>
    <property type="match status" value="1"/>
</dbReference>
<dbReference type="SUPFAM" id="SSF54211">
    <property type="entry name" value="Ribosomal protein S5 domain 2-like"/>
    <property type="match status" value="1"/>
</dbReference>
<feature type="chain" id="PRO_0000141573" description="Shikimate kinase">
    <location>
        <begin position="1"/>
        <end position="294"/>
    </location>
</feature>
<feature type="binding site" evidence="2">
    <location>
        <begin position="87"/>
        <end position="97"/>
    </location>
    <ligand>
        <name>ATP</name>
        <dbReference type="ChEBI" id="CHEBI:30616"/>
    </ligand>
</feature>
<sequence>MTFEGHACAFGAGTIINAIATWKGAAFGVDLKTFAEVSLFEGKSGIKGSIEGTPEGDTRLIEHCVELVLERFGLELEGTIITGSEIPLAGGLKSSSAAANASVLATLRAVGEILPPLEIVKLGVRAAKEVGVTVTGAFDDACASFLGGIVVTDNRKMELVRREEADSKVLIFAPSKKAFSADTNVKRSRLIAPYVEMAYELALKGEYERAMTLNGFLYCGALGFDTEYMLKALECGVTGVSLSGTGPSYAALVKAEQVKELKSAWESCGMEGKVIETSINNRDAISFKGRGSLE</sequence>
<evidence type="ECO:0000250" key="1"/>
<evidence type="ECO:0000255" key="2"/>
<evidence type="ECO:0000305" key="3"/>
<proteinExistence type="inferred from homology"/>
<gene>
    <name type="primary">aroK</name>
    <name type="synonym">aroL</name>
    <name type="ordered locus">MA_1378</name>
</gene>
<protein>
    <recommendedName>
        <fullName>Shikimate kinase</fullName>
        <shortName>SK</shortName>
        <ecNumber>2.7.1.71</ecNumber>
    </recommendedName>
</protein>
<name>AROK_METAC</name>
<reference key="1">
    <citation type="journal article" date="2002" name="Genome Res.">
        <title>The genome of Methanosarcina acetivorans reveals extensive metabolic and physiological diversity.</title>
        <authorList>
            <person name="Galagan J.E."/>
            <person name="Nusbaum C."/>
            <person name="Roy A."/>
            <person name="Endrizzi M.G."/>
            <person name="Macdonald P."/>
            <person name="FitzHugh W."/>
            <person name="Calvo S."/>
            <person name="Engels R."/>
            <person name="Smirnov S."/>
            <person name="Atnoor D."/>
            <person name="Brown A."/>
            <person name="Allen N."/>
            <person name="Naylor J."/>
            <person name="Stange-Thomann N."/>
            <person name="DeArellano K."/>
            <person name="Johnson R."/>
            <person name="Linton L."/>
            <person name="McEwan P."/>
            <person name="McKernan K."/>
            <person name="Talamas J."/>
            <person name="Tirrell A."/>
            <person name="Ye W."/>
            <person name="Zimmer A."/>
            <person name="Barber R.D."/>
            <person name="Cann I."/>
            <person name="Graham D.E."/>
            <person name="Grahame D.A."/>
            <person name="Guss A.M."/>
            <person name="Hedderich R."/>
            <person name="Ingram-Smith C."/>
            <person name="Kuettner H.C."/>
            <person name="Krzycki J.A."/>
            <person name="Leigh J.A."/>
            <person name="Li W."/>
            <person name="Liu J."/>
            <person name="Mukhopadhyay B."/>
            <person name="Reeve J.N."/>
            <person name="Smith K."/>
            <person name="Springer T.A."/>
            <person name="Umayam L.A."/>
            <person name="White O."/>
            <person name="White R.H."/>
            <person name="de Macario E.C."/>
            <person name="Ferry J.G."/>
            <person name="Jarrell K.F."/>
            <person name="Jing H."/>
            <person name="Macario A.J.L."/>
            <person name="Paulsen I.T."/>
            <person name="Pritchett M."/>
            <person name="Sowers K.R."/>
            <person name="Swanson R.V."/>
            <person name="Zinder S.H."/>
            <person name="Lander E."/>
            <person name="Metcalf W.W."/>
            <person name="Birren B."/>
        </authorList>
    </citation>
    <scope>NUCLEOTIDE SEQUENCE [LARGE SCALE GENOMIC DNA]</scope>
    <source>
        <strain>ATCC 35395 / DSM 2834 / JCM 12185 / C2A</strain>
    </source>
</reference>
<accession>Q8TR06</accession>